<keyword id="KW-0012">Acyltransferase</keyword>
<keyword id="KW-0963">Cytoplasm</keyword>
<keyword id="KW-0808">Transferase</keyword>
<protein>
    <recommendedName>
        <fullName evidence="1">Octanoyltransferase</fullName>
        <ecNumber evidence="1">2.3.1.181</ecNumber>
    </recommendedName>
    <alternativeName>
        <fullName evidence="1">Lipoate-protein ligase B</fullName>
    </alternativeName>
    <alternativeName>
        <fullName evidence="1">Lipoyl/octanoyl transferase</fullName>
    </alternativeName>
    <alternativeName>
        <fullName evidence="1">Octanoyl-[acyl-carrier-protein]-protein N-octanoyltransferase</fullName>
    </alternativeName>
</protein>
<dbReference type="EC" id="2.3.1.181" evidence="1"/>
<dbReference type="EMBL" id="CP000548">
    <property type="protein sequence ID" value="ABO05152.1"/>
    <property type="molecule type" value="Genomic_DNA"/>
</dbReference>
<dbReference type="SMR" id="A3MR18"/>
<dbReference type="KEGG" id="bmn:BMA10247_3187"/>
<dbReference type="UniPathway" id="UPA00538">
    <property type="reaction ID" value="UER00592"/>
</dbReference>
<dbReference type="GO" id="GO:0005737">
    <property type="term" value="C:cytoplasm"/>
    <property type="evidence" value="ECO:0007669"/>
    <property type="project" value="UniProtKB-SubCell"/>
</dbReference>
<dbReference type="GO" id="GO:0033819">
    <property type="term" value="F:lipoyl(octanoyl) transferase activity"/>
    <property type="evidence" value="ECO:0007669"/>
    <property type="project" value="UniProtKB-EC"/>
</dbReference>
<dbReference type="GO" id="GO:0036211">
    <property type="term" value="P:protein modification process"/>
    <property type="evidence" value="ECO:0007669"/>
    <property type="project" value="InterPro"/>
</dbReference>
<dbReference type="CDD" id="cd16444">
    <property type="entry name" value="LipB"/>
    <property type="match status" value="1"/>
</dbReference>
<dbReference type="FunFam" id="3.30.930.10:FF:000020">
    <property type="entry name" value="Octanoyltransferase"/>
    <property type="match status" value="1"/>
</dbReference>
<dbReference type="Gene3D" id="3.30.930.10">
    <property type="entry name" value="Bira Bifunctional Protein, Domain 2"/>
    <property type="match status" value="1"/>
</dbReference>
<dbReference type="HAMAP" id="MF_00013">
    <property type="entry name" value="LipB"/>
    <property type="match status" value="1"/>
</dbReference>
<dbReference type="InterPro" id="IPR045864">
    <property type="entry name" value="aa-tRNA-synth_II/BPL/LPL"/>
</dbReference>
<dbReference type="InterPro" id="IPR004143">
    <property type="entry name" value="BPL_LPL_catalytic"/>
</dbReference>
<dbReference type="InterPro" id="IPR000544">
    <property type="entry name" value="Octanoyltransferase"/>
</dbReference>
<dbReference type="InterPro" id="IPR020605">
    <property type="entry name" value="Octanoyltransferase_CS"/>
</dbReference>
<dbReference type="NCBIfam" id="TIGR00214">
    <property type="entry name" value="lipB"/>
    <property type="match status" value="1"/>
</dbReference>
<dbReference type="NCBIfam" id="NF010922">
    <property type="entry name" value="PRK14342.1"/>
    <property type="match status" value="1"/>
</dbReference>
<dbReference type="NCBIfam" id="NF010923">
    <property type="entry name" value="PRK14343.1"/>
    <property type="match status" value="1"/>
</dbReference>
<dbReference type="PANTHER" id="PTHR10993:SF7">
    <property type="entry name" value="LIPOYLTRANSFERASE 2, MITOCHONDRIAL-RELATED"/>
    <property type="match status" value="1"/>
</dbReference>
<dbReference type="PANTHER" id="PTHR10993">
    <property type="entry name" value="OCTANOYLTRANSFERASE"/>
    <property type="match status" value="1"/>
</dbReference>
<dbReference type="Pfam" id="PF21948">
    <property type="entry name" value="LplA-B_cat"/>
    <property type="match status" value="1"/>
</dbReference>
<dbReference type="PIRSF" id="PIRSF016262">
    <property type="entry name" value="LPLase"/>
    <property type="match status" value="1"/>
</dbReference>
<dbReference type="SUPFAM" id="SSF55681">
    <property type="entry name" value="Class II aaRS and biotin synthetases"/>
    <property type="match status" value="1"/>
</dbReference>
<dbReference type="PROSITE" id="PS51733">
    <property type="entry name" value="BPL_LPL_CATALYTIC"/>
    <property type="match status" value="1"/>
</dbReference>
<dbReference type="PROSITE" id="PS01313">
    <property type="entry name" value="LIPB"/>
    <property type="match status" value="1"/>
</dbReference>
<organism>
    <name type="scientific">Burkholderia mallei (strain NCTC 10247)</name>
    <dbReference type="NCBI Taxonomy" id="320389"/>
    <lineage>
        <taxon>Bacteria</taxon>
        <taxon>Pseudomonadati</taxon>
        <taxon>Pseudomonadota</taxon>
        <taxon>Betaproteobacteria</taxon>
        <taxon>Burkholderiales</taxon>
        <taxon>Burkholderiaceae</taxon>
        <taxon>Burkholderia</taxon>
        <taxon>pseudomallei group</taxon>
    </lineage>
</organism>
<comment type="function">
    <text evidence="1">Catalyzes the transfer of endogenously produced octanoic acid from octanoyl-acyl-carrier-protein onto the lipoyl domains of lipoate-dependent enzymes. Lipoyl-ACP can also act as a substrate although octanoyl-ACP is likely to be the physiological substrate.</text>
</comment>
<comment type="catalytic activity">
    <reaction evidence="1">
        <text>octanoyl-[ACP] + L-lysyl-[protein] = N(6)-octanoyl-L-lysyl-[protein] + holo-[ACP] + H(+)</text>
        <dbReference type="Rhea" id="RHEA:17665"/>
        <dbReference type="Rhea" id="RHEA-COMP:9636"/>
        <dbReference type="Rhea" id="RHEA-COMP:9685"/>
        <dbReference type="Rhea" id="RHEA-COMP:9752"/>
        <dbReference type="Rhea" id="RHEA-COMP:9928"/>
        <dbReference type="ChEBI" id="CHEBI:15378"/>
        <dbReference type="ChEBI" id="CHEBI:29969"/>
        <dbReference type="ChEBI" id="CHEBI:64479"/>
        <dbReference type="ChEBI" id="CHEBI:78463"/>
        <dbReference type="ChEBI" id="CHEBI:78809"/>
        <dbReference type="EC" id="2.3.1.181"/>
    </reaction>
</comment>
<comment type="pathway">
    <text evidence="1">Protein modification; protein lipoylation via endogenous pathway; protein N(6)-(lipoyl)lysine from octanoyl-[acyl-carrier-protein]: step 1/2.</text>
</comment>
<comment type="subcellular location">
    <subcellularLocation>
        <location evidence="1">Cytoplasm</location>
    </subcellularLocation>
</comment>
<comment type="miscellaneous">
    <text evidence="1">In the reaction, the free carboxyl group of octanoic acid is attached via an amide linkage to the epsilon-amino group of a specific lysine residue of lipoyl domains of lipoate-dependent enzymes.</text>
</comment>
<comment type="similarity">
    <text evidence="1">Belongs to the LipB family.</text>
</comment>
<accession>A3MR18</accession>
<feature type="chain" id="PRO_1000001091" description="Octanoyltransferase">
    <location>
        <begin position="1"/>
        <end position="249"/>
    </location>
</feature>
<feature type="domain" description="BPL/LPL catalytic" evidence="2">
    <location>
        <begin position="53"/>
        <end position="234"/>
    </location>
</feature>
<feature type="active site" description="Acyl-thioester intermediate" evidence="1">
    <location>
        <position position="196"/>
    </location>
</feature>
<feature type="binding site" evidence="1">
    <location>
        <begin position="93"/>
        <end position="100"/>
    </location>
    <ligand>
        <name>substrate</name>
    </ligand>
</feature>
<feature type="binding site" evidence="1">
    <location>
        <begin position="165"/>
        <end position="167"/>
    </location>
    <ligand>
        <name>substrate</name>
    </ligand>
</feature>
<feature type="binding site" evidence="1">
    <location>
        <begin position="178"/>
        <end position="180"/>
    </location>
    <ligand>
        <name>substrate</name>
    </ligand>
</feature>
<feature type="site" description="Lowers pKa of active site Cys" evidence="1">
    <location>
        <position position="162"/>
    </location>
</feature>
<evidence type="ECO:0000255" key="1">
    <source>
        <dbReference type="HAMAP-Rule" id="MF_00013"/>
    </source>
</evidence>
<evidence type="ECO:0000255" key="2">
    <source>
        <dbReference type="PROSITE-ProRule" id="PRU01067"/>
    </source>
</evidence>
<gene>
    <name evidence="1" type="primary">lipB</name>
    <name type="ordered locus">BMA10247_3187</name>
</gene>
<reference key="1">
    <citation type="journal article" date="2010" name="Genome Biol. Evol.">
        <title>Continuing evolution of Burkholderia mallei through genome reduction and large-scale rearrangements.</title>
        <authorList>
            <person name="Losada L."/>
            <person name="Ronning C.M."/>
            <person name="DeShazer D."/>
            <person name="Woods D."/>
            <person name="Fedorova N."/>
            <person name="Kim H.S."/>
            <person name="Shabalina S.A."/>
            <person name="Pearson T.R."/>
            <person name="Brinkac L."/>
            <person name="Tan P."/>
            <person name="Nandi T."/>
            <person name="Crabtree J."/>
            <person name="Badger J."/>
            <person name="Beckstrom-Sternberg S."/>
            <person name="Saqib M."/>
            <person name="Schutzer S.E."/>
            <person name="Keim P."/>
            <person name="Nierman W.C."/>
        </authorList>
    </citation>
    <scope>NUCLEOTIDE SEQUENCE [LARGE SCALE GENOMIC DNA]</scope>
    <source>
        <strain>NCTC 10247</strain>
    </source>
</reference>
<name>LIPB_BURM7</name>
<proteinExistence type="inferred from homology"/>
<sequence>MPSAPDAPAAPDAAASVAPNPPAALPVTVRWLGETPYDACFDAMRAFTDARTPDTDDEIWVVEHPPVYTLGQAGNPAHLLVADSGVPLVKVDRGGQITYHGPGQIVAYLLVDLRRRKLMVRTLVTRIEEAVIETLAAYNLASARKAGAPGIYVESGPHRGAKIAALGLKIRNGCSYHGLSVNVKMDLRPFLAINPCGYAGLETIDMASLGATADWHEVAQTLVRRLIAHLDGATAAAALPQQALEQSND</sequence>